<dbReference type="EMBL" id="CR954246">
    <property type="protein sequence ID" value="CAI86787.1"/>
    <property type="molecule type" value="Genomic_DNA"/>
</dbReference>
<dbReference type="SMR" id="Q3IH42"/>
<dbReference type="STRING" id="326442.PSHAa1715"/>
<dbReference type="KEGG" id="pha:PSHAa1715"/>
<dbReference type="PATRIC" id="fig|326442.8.peg.1661"/>
<dbReference type="eggNOG" id="COG2834">
    <property type="taxonomic scope" value="Bacteria"/>
</dbReference>
<dbReference type="HOGENOM" id="CLU_087560_1_0_6"/>
<dbReference type="BioCyc" id="PHAL326442:PSHA_RS08410-MONOMER"/>
<dbReference type="Proteomes" id="UP000006843">
    <property type="component" value="Chromosome I"/>
</dbReference>
<dbReference type="GO" id="GO:0030288">
    <property type="term" value="C:outer membrane-bounded periplasmic space"/>
    <property type="evidence" value="ECO:0007669"/>
    <property type="project" value="TreeGrafter"/>
</dbReference>
<dbReference type="GO" id="GO:0044874">
    <property type="term" value="P:lipoprotein localization to outer membrane"/>
    <property type="evidence" value="ECO:0007669"/>
    <property type="project" value="UniProtKB-UniRule"/>
</dbReference>
<dbReference type="GO" id="GO:0042953">
    <property type="term" value="P:lipoprotein transport"/>
    <property type="evidence" value="ECO:0007669"/>
    <property type="project" value="InterPro"/>
</dbReference>
<dbReference type="CDD" id="cd16325">
    <property type="entry name" value="LolA"/>
    <property type="match status" value="1"/>
</dbReference>
<dbReference type="Gene3D" id="2.50.20.10">
    <property type="entry name" value="Lipoprotein localisation LolA/LolB/LppX"/>
    <property type="match status" value="1"/>
</dbReference>
<dbReference type="HAMAP" id="MF_00240">
    <property type="entry name" value="LolA"/>
    <property type="match status" value="1"/>
</dbReference>
<dbReference type="InterPro" id="IPR029046">
    <property type="entry name" value="LolA/LolB/LppX"/>
</dbReference>
<dbReference type="InterPro" id="IPR004564">
    <property type="entry name" value="OM_lipoprot_carrier_LolA-like"/>
</dbReference>
<dbReference type="InterPro" id="IPR018323">
    <property type="entry name" value="OM_lipoprot_carrier_LolA_Pbac"/>
</dbReference>
<dbReference type="NCBIfam" id="TIGR00547">
    <property type="entry name" value="lolA"/>
    <property type="match status" value="1"/>
</dbReference>
<dbReference type="PANTHER" id="PTHR35869">
    <property type="entry name" value="OUTER-MEMBRANE LIPOPROTEIN CARRIER PROTEIN"/>
    <property type="match status" value="1"/>
</dbReference>
<dbReference type="PANTHER" id="PTHR35869:SF1">
    <property type="entry name" value="OUTER-MEMBRANE LIPOPROTEIN CARRIER PROTEIN"/>
    <property type="match status" value="1"/>
</dbReference>
<dbReference type="Pfam" id="PF03548">
    <property type="entry name" value="LolA"/>
    <property type="match status" value="1"/>
</dbReference>
<dbReference type="SUPFAM" id="SSF89392">
    <property type="entry name" value="Prokaryotic lipoproteins and lipoprotein localization factors"/>
    <property type="match status" value="1"/>
</dbReference>
<proteinExistence type="inferred from homology"/>
<name>LOLA_PSET1</name>
<organism>
    <name type="scientific">Pseudoalteromonas translucida (strain TAC 125)</name>
    <dbReference type="NCBI Taxonomy" id="326442"/>
    <lineage>
        <taxon>Bacteria</taxon>
        <taxon>Pseudomonadati</taxon>
        <taxon>Pseudomonadota</taxon>
        <taxon>Gammaproteobacteria</taxon>
        <taxon>Alteromonadales</taxon>
        <taxon>Pseudoalteromonadaceae</taxon>
        <taxon>Pseudoalteromonas</taxon>
    </lineage>
</organism>
<accession>Q3IH42</accession>
<sequence length="208" mass="22769">MKKLNTLLLVLGSLVATPSFADDSQALQDQLASLKSFKAQFSQKVTDKQGQAVMQGEGTIALQQPMMIRWQQTNPDDTLFVSNGDKTYYFDSFAEQVTIMQTSSLIDSTPFVLLTSKDPAQWEKYSVLATNSGFSVTPNKGVESQVEQLDITFAGNEQGLAKLVVTDNSGQLSSFTFNDAKVNTPLDKSTFEFTPPEGVEIDDQSNGE</sequence>
<keyword id="KW-0143">Chaperone</keyword>
<keyword id="KW-0574">Periplasm</keyword>
<keyword id="KW-0653">Protein transport</keyword>
<keyword id="KW-1185">Reference proteome</keyword>
<keyword id="KW-0732">Signal</keyword>
<keyword id="KW-0813">Transport</keyword>
<feature type="signal peptide" evidence="1">
    <location>
        <begin position="1"/>
        <end position="21"/>
    </location>
</feature>
<feature type="chain" id="PRO_0000336657" description="Outer-membrane lipoprotein carrier protein">
    <location>
        <begin position="22"/>
        <end position="208"/>
    </location>
</feature>
<feature type="region of interest" description="Disordered" evidence="2">
    <location>
        <begin position="188"/>
        <end position="208"/>
    </location>
</feature>
<feature type="compositionally biased region" description="Acidic residues" evidence="2">
    <location>
        <begin position="199"/>
        <end position="208"/>
    </location>
</feature>
<evidence type="ECO:0000255" key="1">
    <source>
        <dbReference type="HAMAP-Rule" id="MF_00240"/>
    </source>
</evidence>
<evidence type="ECO:0000256" key="2">
    <source>
        <dbReference type="SAM" id="MobiDB-lite"/>
    </source>
</evidence>
<comment type="function">
    <text evidence="1">Participates in the translocation of lipoproteins from the inner membrane to the outer membrane. Only forms a complex with a lipoprotein if the residue after the N-terminal Cys is not an aspartate (The Asp acts as a targeting signal to indicate that the lipoprotein should stay in the inner membrane).</text>
</comment>
<comment type="subunit">
    <text evidence="1">Monomer.</text>
</comment>
<comment type="subcellular location">
    <subcellularLocation>
        <location evidence="1">Periplasm</location>
    </subcellularLocation>
</comment>
<comment type="similarity">
    <text evidence="1">Belongs to the LolA family.</text>
</comment>
<gene>
    <name evidence="1" type="primary">lolA</name>
    <name type="ordered locus">PSHAa1715</name>
</gene>
<reference key="1">
    <citation type="journal article" date="2005" name="Genome Res.">
        <title>Coping with cold: the genome of the versatile marine Antarctica bacterium Pseudoalteromonas haloplanktis TAC125.</title>
        <authorList>
            <person name="Medigue C."/>
            <person name="Krin E."/>
            <person name="Pascal G."/>
            <person name="Barbe V."/>
            <person name="Bernsel A."/>
            <person name="Bertin P.N."/>
            <person name="Cheung F."/>
            <person name="Cruveiller S."/>
            <person name="D'Amico S."/>
            <person name="Duilio A."/>
            <person name="Fang G."/>
            <person name="Feller G."/>
            <person name="Ho C."/>
            <person name="Mangenot S."/>
            <person name="Marino G."/>
            <person name="Nilsson J."/>
            <person name="Parrilli E."/>
            <person name="Rocha E.P.C."/>
            <person name="Rouy Z."/>
            <person name="Sekowska A."/>
            <person name="Tutino M.L."/>
            <person name="Vallenet D."/>
            <person name="von Heijne G."/>
            <person name="Danchin A."/>
        </authorList>
    </citation>
    <scope>NUCLEOTIDE SEQUENCE [LARGE SCALE GENOMIC DNA]</scope>
    <source>
        <strain>TAC 125</strain>
    </source>
</reference>
<protein>
    <recommendedName>
        <fullName evidence="1">Outer-membrane lipoprotein carrier protein</fullName>
    </recommendedName>
</protein>